<reference key="1">
    <citation type="submission" date="2009-01" db="EMBL/GenBank/DDBJ databases">
        <title>Complete sequence of Clostridium cellulolyticum H10.</title>
        <authorList>
            <consortium name="US DOE Joint Genome Institute"/>
            <person name="Lucas S."/>
            <person name="Copeland A."/>
            <person name="Lapidus A."/>
            <person name="Glavina del Rio T."/>
            <person name="Dalin E."/>
            <person name="Tice H."/>
            <person name="Bruce D."/>
            <person name="Goodwin L."/>
            <person name="Pitluck S."/>
            <person name="Chertkov O."/>
            <person name="Saunders E."/>
            <person name="Brettin T."/>
            <person name="Detter J.C."/>
            <person name="Han C."/>
            <person name="Larimer F."/>
            <person name="Land M."/>
            <person name="Hauser L."/>
            <person name="Kyrpides N."/>
            <person name="Ivanova N."/>
            <person name="Zhou J."/>
            <person name="Richardson P."/>
        </authorList>
    </citation>
    <scope>NUCLEOTIDE SEQUENCE [LARGE SCALE GENOMIC DNA]</scope>
    <source>
        <strain>ATCC 35319 / DSM 5812 / JCM 6584 / H10</strain>
    </source>
</reference>
<proteinExistence type="inferred from homology"/>
<comment type="similarity">
    <text evidence="1">Belongs to the bacterial ribosomal protein bL28 family.</text>
</comment>
<gene>
    <name evidence="1" type="primary">rpmB</name>
    <name type="ordered locus">Ccel_1883</name>
</gene>
<sequence>MAKCEVCSKATSFGNSRSHALNATSRTWKPNVRKIKIIDNGTPRSIKICTRCLRSNKVTRAI</sequence>
<accession>B8I388</accession>
<name>RL28_RUMCH</name>
<feature type="chain" id="PRO_1000195914" description="Large ribosomal subunit protein bL28">
    <location>
        <begin position="1"/>
        <end position="62"/>
    </location>
</feature>
<keyword id="KW-1185">Reference proteome</keyword>
<keyword id="KW-0687">Ribonucleoprotein</keyword>
<keyword id="KW-0689">Ribosomal protein</keyword>
<evidence type="ECO:0000255" key="1">
    <source>
        <dbReference type="HAMAP-Rule" id="MF_00373"/>
    </source>
</evidence>
<evidence type="ECO:0000305" key="2"/>
<organism>
    <name type="scientific">Ruminiclostridium cellulolyticum (strain ATCC 35319 / DSM 5812 / JCM 6584 / H10)</name>
    <name type="common">Clostridium cellulolyticum</name>
    <dbReference type="NCBI Taxonomy" id="394503"/>
    <lineage>
        <taxon>Bacteria</taxon>
        <taxon>Bacillati</taxon>
        <taxon>Bacillota</taxon>
        <taxon>Clostridia</taxon>
        <taxon>Eubacteriales</taxon>
        <taxon>Oscillospiraceae</taxon>
        <taxon>Ruminiclostridium</taxon>
    </lineage>
</organism>
<protein>
    <recommendedName>
        <fullName evidence="1">Large ribosomal subunit protein bL28</fullName>
    </recommendedName>
    <alternativeName>
        <fullName evidence="2">50S ribosomal protein L28</fullName>
    </alternativeName>
</protein>
<dbReference type="EMBL" id="CP001348">
    <property type="protein sequence ID" value="ACL76231.1"/>
    <property type="molecule type" value="Genomic_DNA"/>
</dbReference>
<dbReference type="RefSeq" id="WP_015925336.1">
    <property type="nucleotide sequence ID" value="NC_011898.1"/>
</dbReference>
<dbReference type="SMR" id="B8I388"/>
<dbReference type="STRING" id="394503.Ccel_1883"/>
<dbReference type="KEGG" id="cce:Ccel_1883"/>
<dbReference type="eggNOG" id="COG0227">
    <property type="taxonomic scope" value="Bacteria"/>
</dbReference>
<dbReference type="HOGENOM" id="CLU_064548_7_0_9"/>
<dbReference type="OrthoDB" id="9805609at2"/>
<dbReference type="Proteomes" id="UP000001349">
    <property type="component" value="Chromosome"/>
</dbReference>
<dbReference type="GO" id="GO:1990904">
    <property type="term" value="C:ribonucleoprotein complex"/>
    <property type="evidence" value="ECO:0007669"/>
    <property type="project" value="UniProtKB-KW"/>
</dbReference>
<dbReference type="GO" id="GO:0005840">
    <property type="term" value="C:ribosome"/>
    <property type="evidence" value="ECO:0007669"/>
    <property type="project" value="UniProtKB-KW"/>
</dbReference>
<dbReference type="GO" id="GO:0003735">
    <property type="term" value="F:structural constituent of ribosome"/>
    <property type="evidence" value="ECO:0007669"/>
    <property type="project" value="InterPro"/>
</dbReference>
<dbReference type="GO" id="GO:0006412">
    <property type="term" value="P:translation"/>
    <property type="evidence" value="ECO:0007669"/>
    <property type="project" value="UniProtKB-UniRule"/>
</dbReference>
<dbReference type="Gene3D" id="2.30.170.40">
    <property type="entry name" value="Ribosomal protein L28/L24"/>
    <property type="match status" value="1"/>
</dbReference>
<dbReference type="HAMAP" id="MF_00373">
    <property type="entry name" value="Ribosomal_bL28"/>
    <property type="match status" value="1"/>
</dbReference>
<dbReference type="InterPro" id="IPR050096">
    <property type="entry name" value="Bacterial_rp_bL28"/>
</dbReference>
<dbReference type="InterPro" id="IPR026569">
    <property type="entry name" value="Ribosomal_bL28"/>
</dbReference>
<dbReference type="InterPro" id="IPR034704">
    <property type="entry name" value="Ribosomal_bL28/bL31-like_sf"/>
</dbReference>
<dbReference type="InterPro" id="IPR001383">
    <property type="entry name" value="Ribosomal_bL28_bact-type"/>
</dbReference>
<dbReference type="InterPro" id="IPR037147">
    <property type="entry name" value="Ribosomal_bL28_sf"/>
</dbReference>
<dbReference type="NCBIfam" id="TIGR00009">
    <property type="entry name" value="L28"/>
    <property type="match status" value="1"/>
</dbReference>
<dbReference type="PANTHER" id="PTHR39080">
    <property type="entry name" value="50S RIBOSOMAL PROTEIN L28"/>
    <property type="match status" value="1"/>
</dbReference>
<dbReference type="PANTHER" id="PTHR39080:SF1">
    <property type="entry name" value="LARGE RIBOSOMAL SUBUNIT PROTEIN BL28A"/>
    <property type="match status" value="1"/>
</dbReference>
<dbReference type="Pfam" id="PF00830">
    <property type="entry name" value="Ribosomal_L28"/>
    <property type="match status" value="1"/>
</dbReference>
<dbReference type="SUPFAM" id="SSF143800">
    <property type="entry name" value="L28p-like"/>
    <property type="match status" value="1"/>
</dbReference>